<organism>
    <name type="scientific">Caenorhabditis elegans</name>
    <dbReference type="NCBI Taxonomy" id="6239"/>
    <lineage>
        <taxon>Eukaryota</taxon>
        <taxon>Metazoa</taxon>
        <taxon>Ecdysozoa</taxon>
        <taxon>Nematoda</taxon>
        <taxon>Chromadorea</taxon>
        <taxon>Rhabditida</taxon>
        <taxon>Rhabditina</taxon>
        <taxon>Rhabditomorpha</taxon>
        <taxon>Rhabditoidea</taxon>
        <taxon>Rhabditidae</taxon>
        <taxon>Peloderinae</taxon>
        <taxon>Caenorhabditis</taxon>
    </lineage>
</organism>
<dbReference type="EMBL" id="Z11505">
    <property type="protein sequence ID" value="CAA77589.1"/>
    <property type="molecule type" value="Genomic_DNA"/>
</dbReference>
<dbReference type="PIR" id="S31128">
    <property type="entry name" value="S31128"/>
</dbReference>
<dbReference type="RefSeq" id="NP_498994.1">
    <property type="nucleotide sequence ID" value="NM_066593.3"/>
</dbReference>
<dbReference type="SMR" id="P34483"/>
<dbReference type="FunCoup" id="P34483">
    <property type="interactions" value="1519"/>
</dbReference>
<dbReference type="PaxDb" id="6239-F59B2.8"/>
<dbReference type="EnsemblMetazoa" id="F59B2.8.1">
    <property type="protein sequence ID" value="F59B2.8.1"/>
    <property type="gene ID" value="WBGene00010310"/>
</dbReference>
<dbReference type="GeneID" id="186593"/>
<dbReference type="KEGG" id="cel:CELE_F59B2.8"/>
<dbReference type="UCSC" id="F59B2.8">
    <property type="organism name" value="c. elegans"/>
</dbReference>
<dbReference type="AGR" id="WB:WBGene00010310"/>
<dbReference type="CTD" id="186593"/>
<dbReference type="WormBase" id="F59B2.8">
    <property type="protein sequence ID" value="CE00235"/>
    <property type="gene ID" value="WBGene00010310"/>
</dbReference>
<dbReference type="eggNOG" id="ENOG502TJRT">
    <property type="taxonomic scope" value="Eukaryota"/>
</dbReference>
<dbReference type="GeneTree" id="ENSGT00940000163400"/>
<dbReference type="HOGENOM" id="CLU_052088_2_0_1"/>
<dbReference type="InParanoid" id="P34483"/>
<dbReference type="OMA" id="LVWNERF"/>
<dbReference type="OrthoDB" id="5782924at2759"/>
<dbReference type="PhylomeDB" id="P34483"/>
<dbReference type="PRO" id="PR:P34483"/>
<dbReference type="Proteomes" id="UP000001940">
    <property type="component" value="Chromosome III"/>
</dbReference>
<dbReference type="Bgee" id="WBGene00010310">
    <property type="expression patterns" value="Expressed in pharyngeal muscle cell (C elegans) and 3 other cell types or tissues"/>
</dbReference>
<dbReference type="InterPro" id="IPR012885">
    <property type="entry name" value="F-box-assoc_dom_typ2"/>
</dbReference>
<dbReference type="InterPro" id="IPR001810">
    <property type="entry name" value="F-box_dom"/>
</dbReference>
<dbReference type="PANTHER" id="PTHR21503">
    <property type="entry name" value="F-BOX-CONTAINING HYPOTHETICAL PROTEIN C.ELEGANS"/>
    <property type="match status" value="1"/>
</dbReference>
<dbReference type="PANTHER" id="PTHR21503:SF49">
    <property type="entry name" value="PROTEIN CBG06869"/>
    <property type="match status" value="1"/>
</dbReference>
<dbReference type="Pfam" id="PF00646">
    <property type="entry name" value="F-box"/>
    <property type="match status" value="1"/>
</dbReference>
<dbReference type="Pfam" id="PF07735">
    <property type="entry name" value="FBA_2"/>
    <property type="match status" value="1"/>
</dbReference>
<dbReference type="PROSITE" id="PS50181">
    <property type="entry name" value="FBOX"/>
    <property type="match status" value="1"/>
</dbReference>
<gene>
    <name type="ORF">F59B2.8</name>
</gene>
<feature type="chain" id="PRO_0000065380" description="Uncharacterized protein F59B2.8">
    <location>
        <begin position="1"/>
        <end position="435"/>
    </location>
</feature>
<feature type="domain" description="F-box" evidence="1">
    <location>
        <begin position="7"/>
        <end position="58"/>
    </location>
</feature>
<name>YMJ8_CAEEL</name>
<reference key="1">
    <citation type="journal article" date="1994" name="Nature">
        <title>2.2 Mb of contiguous nucleotide sequence from chromosome III of C. elegans.</title>
        <authorList>
            <person name="Wilson R."/>
            <person name="Ainscough R."/>
            <person name="Anderson K."/>
            <person name="Baynes C."/>
            <person name="Berks M."/>
            <person name="Bonfield J."/>
            <person name="Burton J."/>
            <person name="Connell M."/>
            <person name="Copsey T."/>
            <person name="Cooper J."/>
            <person name="Coulson A."/>
            <person name="Craxton M."/>
            <person name="Dear S."/>
            <person name="Du Z."/>
            <person name="Durbin R."/>
            <person name="Favello A."/>
            <person name="Fraser A."/>
            <person name="Fulton L."/>
            <person name="Gardner A."/>
            <person name="Green P."/>
            <person name="Hawkins T."/>
            <person name="Hillier L."/>
            <person name="Jier M."/>
            <person name="Johnston L."/>
            <person name="Jones M."/>
            <person name="Kershaw J."/>
            <person name="Kirsten J."/>
            <person name="Laisster N."/>
            <person name="Latreille P."/>
            <person name="Lightning J."/>
            <person name="Lloyd C."/>
            <person name="Mortimore B."/>
            <person name="O'Callaghan M."/>
            <person name="Parsons J."/>
            <person name="Percy C."/>
            <person name="Rifken L."/>
            <person name="Roopra A."/>
            <person name="Saunders D."/>
            <person name="Shownkeen R."/>
            <person name="Sims M."/>
            <person name="Smaldon N."/>
            <person name="Smith A."/>
            <person name="Smith M."/>
            <person name="Sonnhammer E."/>
            <person name="Staden R."/>
            <person name="Sulston J."/>
            <person name="Thierry-Mieg J."/>
            <person name="Thomas K."/>
            <person name="Vaudin M."/>
            <person name="Vaughan K."/>
            <person name="Waterston R."/>
            <person name="Watson A."/>
            <person name="Weinstock L."/>
            <person name="Wilkinson-Sproat J."/>
            <person name="Wohldman P."/>
        </authorList>
    </citation>
    <scope>NUCLEOTIDE SEQUENCE [LARGE SCALE GENOMIC DNA]</scope>
    <source>
        <strain>Bristol N2</strain>
    </source>
</reference>
<reference key="2">
    <citation type="journal article" date="1998" name="Science">
        <title>Genome sequence of the nematode C. elegans: a platform for investigating biology.</title>
        <authorList>
            <consortium name="The C. elegans sequencing consortium"/>
        </authorList>
    </citation>
    <scope>NUCLEOTIDE SEQUENCE [LARGE SCALE GENOMIC DNA]</scope>
    <source>
        <strain>Bristol N2</strain>
    </source>
</reference>
<accession>P34483</accession>
<evidence type="ECO:0000255" key="1">
    <source>
        <dbReference type="PROSITE-ProRule" id="PRU00080"/>
    </source>
</evidence>
<keyword id="KW-1185">Reference proteome</keyword>
<protein>
    <recommendedName>
        <fullName>Uncharacterized protein F59B2.8</fullName>
    </recommendedName>
</protein>
<proteinExistence type="predicted"/>
<sequence length="435" mass="52091">MEFMSSPFPITKLPLVPRCKILKFFDYGDLLDISLCSKRMAQTVRDIHITADLHYLTLGKDNQQSIQIQFKQEQKVIYWDFKLDLVEEEMPERRTVGAIVFEKCRKYSQREIGLFQFSSYHYDIEDSIGEVSKHLFYIFPTSIEIRLSVQFCRTLRNLFSYEHLQNIDVLTLLGSIMLQNVLEKIFSRVKIRRKLWVEPETDDEYPILQALHVENLHLASARWMTRDHLLQLTCCSVDFHEHYFGWKDLTVFAENWLNNKNSKLEMVRFGWPNDIDSLSANFEGLKTHKWDPKQREKKFLYSKDNRLHRIDCTKGLELERDDGELATWIYEPDPLTSSLYFLVWTERFPEKKRLEKLPKMLAPYYEQLVQLRKEYDDSCNLEWLLSNPNLKLDEFVETYRILRGMDSEVRLSSIGRVRRRRIFDEMYNIIDAQND</sequence>